<accession>B3EKJ8</accession>
<reference key="1">
    <citation type="submission" date="2008-06" db="EMBL/GenBank/DDBJ databases">
        <title>Complete sequence of Chlorobium phaeobacteroides BS1.</title>
        <authorList>
            <consortium name="US DOE Joint Genome Institute"/>
            <person name="Lucas S."/>
            <person name="Copeland A."/>
            <person name="Lapidus A."/>
            <person name="Glavina del Rio T."/>
            <person name="Dalin E."/>
            <person name="Tice H."/>
            <person name="Bruce D."/>
            <person name="Goodwin L."/>
            <person name="Pitluck S."/>
            <person name="Schmutz J."/>
            <person name="Larimer F."/>
            <person name="Land M."/>
            <person name="Hauser L."/>
            <person name="Kyrpides N."/>
            <person name="Ovchinnikova G."/>
            <person name="Li T."/>
            <person name="Liu Z."/>
            <person name="Zhao F."/>
            <person name="Overmann J."/>
            <person name="Bryant D.A."/>
            <person name="Richardson P."/>
        </authorList>
    </citation>
    <scope>NUCLEOTIDE SEQUENCE [LARGE SCALE GENOMIC DNA]</scope>
    <source>
        <strain>BS1</strain>
    </source>
</reference>
<gene>
    <name evidence="1" type="primary">recO</name>
    <name type="ordered locus">Cphamn1_0203</name>
</gene>
<keyword id="KW-0227">DNA damage</keyword>
<keyword id="KW-0233">DNA recombination</keyword>
<keyword id="KW-0234">DNA repair</keyword>
<comment type="function">
    <text evidence="1">Involved in DNA repair and RecF pathway recombination.</text>
</comment>
<comment type="similarity">
    <text evidence="1">Belongs to the RecO family.</text>
</comment>
<proteinExistence type="inferred from homology"/>
<dbReference type="EMBL" id="CP001101">
    <property type="protein sequence ID" value="ACE03176.1"/>
    <property type="molecule type" value="Genomic_DNA"/>
</dbReference>
<dbReference type="SMR" id="B3EKJ8"/>
<dbReference type="STRING" id="331678.Cphamn1_0203"/>
<dbReference type="KEGG" id="cpb:Cphamn1_0203"/>
<dbReference type="eggNOG" id="COG1381">
    <property type="taxonomic scope" value="Bacteria"/>
</dbReference>
<dbReference type="HOGENOM" id="CLU_066632_1_0_10"/>
<dbReference type="GO" id="GO:0043590">
    <property type="term" value="C:bacterial nucleoid"/>
    <property type="evidence" value="ECO:0007669"/>
    <property type="project" value="TreeGrafter"/>
</dbReference>
<dbReference type="GO" id="GO:0006310">
    <property type="term" value="P:DNA recombination"/>
    <property type="evidence" value="ECO:0007669"/>
    <property type="project" value="UniProtKB-UniRule"/>
</dbReference>
<dbReference type="GO" id="GO:0006302">
    <property type="term" value="P:double-strand break repair"/>
    <property type="evidence" value="ECO:0007669"/>
    <property type="project" value="TreeGrafter"/>
</dbReference>
<dbReference type="Gene3D" id="2.40.50.140">
    <property type="entry name" value="Nucleic acid-binding proteins"/>
    <property type="match status" value="1"/>
</dbReference>
<dbReference type="Gene3D" id="1.20.1440.120">
    <property type="entry name" value="Recombination protein O, C-terminal domain"/>
    <property type="match status" value="1"/>
</dbReference>
<dbReference type="HAMAP" id="MF_00201">
    <property type="entry name" value="RecO"/>
    <property type="match status" value="1"/>
</dbReference>
<dbReference type="InterPro" id="IPR037278">
    <property type="entry name" value="ARFGAP/RecO"/>
</dbReference>
<dbReference type="InterPro" id="IPR022572">
    <property type="entry name" value="DNA_rep/recomb_RecO_N"/>
</dbReference>
<dbReference type="InterPro" id="IPR012340">
    <property type="entry name" value="NA-bd_OB-fold"/>
</dbReference>
<dbReference type="InterPro" id="IPR003717">
    <property type="entry name" value="RecO"/>
</dbReference>
<dbReference type="InterPro" id="IPR042242">
    <property type="entry name" value="RecO_C"/>
</dbReference>
<dbReference type="NCBIfam" id="TIGR00613">
    <property type="entry name" value="reco"/>
    <property type="match status" value="1"/>
</dbReference>
<dbReference type="PANTHER" id="PTHR33991">
    <property type="entry name" value="DNA REPAIR PROTEIN RECO"/>
    <property type="match status" value="1"/>
</dbReference>
<dbReference type="PANTHER" id="PTHR33991:SF1">
    <property type="entry name" value="DNA REPAIR PROTEIN RECO"/>
    <property type="match status" value="1"/>
</dbReference>
<dbReference type="Pfam" id="PF02565">
    <property type="entry name" value="RecO_C"/>
    <property type="match status" value="1"/>
</dbReference>
<dbReference type="Pfam" id="PF11967">
    <property type="entry name" value="RecO_N"/>
    <property type="match status" value="1"/>
</dbReference>
<dbReference type="SUPFAM" id="SSF57863">
    <property type="entry name" value="ArfGap/RecO-like zinc finger"/>
    <property type="match status" value="1"/>
</dbReference>
<dbReference type="SUPFAM" id="SSF50249">
    <property type="entry name" value="Nucleic acid-binding proteins"/>
    <property type="match status" value="1"/>
</dbReference>
<name>RECO_CHLPB</name>
<organism>
    <name type="scientific">Chlorobium phaeobacteroides (strain BS1)</name>
    <dbReference type="NCBI Taxonomy" id="331678"/>
    <lineage>
        <taxon>Bacteria</taxon>
        <taxon>Pseudomonadati</taxon>
        <taxon>Chlorobiota</taxon>
        <taxon>Chlorobiia</taxon>
        <taxon>Chlorobiales</taxon>
        <taxon>Chlorobiaceae</taxon>
        <taxon>Chlorobium/Pelodictyon group</taxon>
        <taxon>Chlorobium</taxon>
    </lineage>
</organism>
<evidence type="ECO:0000255" key="1">
    <source>
        <dbReference type="HAMAP-Rule" id="MF_00201"/>
    </source>
</evidence>
<protein>
    <recommendedName>
        <fullName evidence="1">DNA repair protein RecO</fullName>
    </recommendedName>
    <alternativeName>
        <fullName evidence="1">Recombination protein O</fullName>
    </alternativeName>
</protein>
<feature type="chain" id="PRO_1000099370" description="DNA repair protein RecO">
    <location>
        <begin position="1"/>
        <end position="261"/>
    </location>
</feature>
<sequence>MLTKTRAVVLKEVKFREQSKICSLYTRDFGRISVILKGGRNLKSRLSGLFCTGSLLEVVLYNRSNRDLQLVSEARIIRSPMTAEPSMERFSAIYRLIEILKISTGNEEKNIRLFNALERTLEKLCAPCRNADAAVAWFMLKLISESGFEPSIEQCVTTGKSILPMLQEGSADDLCLTYDPGGVSLPVPAAQKGPPGQRLPVQVYLLMRTLNRLDIRSIDEIDIPADNSRLLCDILQNYCSLHNNYNPSSKNRRIISRILYE</sequence>